<gene>
    <name type="primary">SARS1</name>
    <name type="synonym">SARS</name>
    <name type="ORF">QccE-14020</name>
</gene>
<protein>
    <recommendedName>
        <fullName>Serine--tRNA ligase, cytoplasmic</fullName>
        <ecNumber evidence="1">6.1.1.11</ecNumber>
    </recommendedName>
    <alternativeName>
        <fullName>Seryl-tRNA synthetase</fullName>
        <shortName>SerRS</shortName>
    </alternativeName>
    <alternativeName>
        <fullName>Seryl-tRNA(Ser/Sec) synthetase</fullName>
    </alternativeName>
</protein>
<comment type="function">
    <text evidence="1">Catalyzes the attachment of serine to tRNA(Ser) in a two-step reaction: serine is first activated by ATP to form Ser-AMP and then transferred to the acceptor end of tRNA(Ser). Is probably also able to aminoacylate tRNA(Sec) with serine, to form the misacylated tRNA L-seryl-tRNA(Sec), which will be further converted into selenocysteinyl-tRNA(Sec). In the nucleus, binds to the VEGFA core promoter and prevents MYC binding and transcriptional activation by MYC. Recruits SIRT2 to the VEGFA promoter, promoting deacetylation of histone H4 at 'Lys-16' (H4K16). Thereby, inhibits the production of VEGFA and sprouting angiogenesis mediated by VEGFA.</text>
</comment>
<comment type="catalytic activity">
    <reaction evidence="1">
        <text>tRNA(Ser) + L-serine + ATP = L-seryl-tRNA(Ser) + AMP + diphosphate + H(+)</text>
        <dbReference type="Rhea" id="RHEA:12292"/>
        <dbReference type="Rhea" id="RHEA-COMP:9669"/>
        <dbReference type="Rhea" id="RHEA-COMP:9703"/>
        <dbReference type="ChEBI" id="CHEBI:15378"/>
        <dbReference type="ChEBI" id="CHEBI:30616"/>
        <dbReference type="ChEBI" id="CHEBI:33019"/>
        <dbReference type="ChEBI" id="CHEBI:33384"/>
        <dbReference type="ChEBI" id="CHEBI:78442"/>
        <dbReference type="ChEBI" id="CHEBI:78533"/>
        <dbReference type="ChEBI" id="CHEBI:456215"/>
        <dbReference type="EC" id="6.1.1.11"/>
    </reaction>
</comment>
<comment type="catalytic activity">
    <reaction evidence="1">
        <text>tRNA(Sec) + L-serine + ATP = L-seryl-tRNA(Sec) + AMP + diphosphate + H(+)</text>
        <dbReference type="Rhea" id="RHEA:42580"/>
        <dbReference type="Rhea" id="RHEA-COMP:9742"/>
        <dbReference type="Rhea" id="RHEA-COMP:10128"/>
        <dbReference type="ChEBI" id="CHEBI:15378"/>
        <dbReference type="ChEBI" id="CHEBI:30616"/>
        <dbReference type="ChEBI" id="CHEBI:33019"/>
        <dbReference type="ChEBI" id="CHEBI:33384"/>
        <dbReference type="ChEBI" id="CHEBI:78442"/>
        <dbReference type="ChEBI" id="CHEBI:78533"/>
        <dbReference type="ChEBI" id="CHEBI:456215"/>
        <dbReference type="EC" id="6.1.1.11"/>
    </reaction>
</comment>
<comment type="pathway">
    <text>Aminoacyl-tRNA biosynthesis; selenocysteinyl-tRNA(Sec) biosynthesis; L-seryl-tRNA(Sec) from L-serine and tRNA(Sec): step 1/1.</text>
</comment>
<comment type="subunit">
    <text evidence="1">Homodimer. The tRNA molecule may bind across the dimer. Interacts with SIRT2. Interacts with METTL6; interaction is required for the tRNA N(3)-methylcytidine methyltransferase activity of METTL6.</text>
</comment>
<comment type="subcellular location">
    <subcellularLocation>
        <location evidence="1">Cytoplasm</location>
    </subcellularLocation>
    <subcellularLocation>
        <location evidence="1">Nucleus</location>
    </subcellularLocation>
    <text evidence="1">Predominantly cytoplasmic, but a minor proportion is also found in the nucleus.</text>
</comment>
<comment type="domain">
    <text evidence="1">Consists of two distinct domains, a catalytic core and a N-terminal extension that is involved in tRNA binding.</text>
</comment>
<comment type="similarity">
    <text evidence="3">Belongs to the class-II aminoacyl-tRNA synthetase family. Type-1 seryl-tRNA synthetase subfamily.</text>
</comment>
<keyword id="KW-0007">Acetylation</keyword>
<keyword id="KW-0030">Aminoacyl-tRNA synthetase</keyword>
<keyword id="KW-0067">ATP-binding</keyword>
<keyword id="KW-0963">Cytoplasm</keyword>
<keyword id="KW-0238">DNA-binding</keyword>
<keyword id="KW-0436">Ligase</keyword>
<keyword id="KW-0547">Nucleotide-binding</keyword>
<keyword id="KW-0539">Nucleus</keyword>
<keyword id="KW-0597">Phosphoprotein</keyword>
<keyword id="KW-0648">Protein biosynthesis</keyword>
<keyword id="KW-1185">Reference proteome</keyword>
<name>SYSC_MACFA</name>
<dbReference type="EC" id="6.1.1.11" evidence="1"/>
<dbReference type="EMBL" id="AB169795">
    <property type="protein sequence ID" value="BAE01876.1"/>
    <property type="molecule type" value="mRNA"/>
</dbReference>
<dbReference type="RefSeq" id="NP_001270308.1">
    <property type="nucleotide sequence ID" value="NM_001283379.2"/>
</dbReference>
<dbReference type="SMR" id="Q4R4U9"/>
<dbReference type="STRING" id="9541.ENSMFAP00000023246"/>
<dbReference type="GeneID" id="101866794"/>
<dbReference type="KEGG" id="mcf:101866794"/>
<dbReference type="CTD" id="6301"/>
<dbReference type="eggNOG" id="KOG2509">
    <property type="taxonomic scope" value="Eukaryota"/>
</dbReference>
<dbReference type="UniPathway" id="UPA00906">
    <property type="reaction ID" value="UER00895"/>
</dbReference>
<dbReference type="Proteomes" id="UP000233100">
    <property type="component" value="Unplaced"/>
</dbReference>
<dbReference type="GO" id="GO:0005737">
    <property type="term" value="C:cytoplasm"/>
    <property type="evidence" value="ECO:0000250"/>
    <property type="project" value="UniProtKB"/>
</dbReference>
<dbReference type="GO" id="GO:0005829">
    <property type="term" value="C:cytosol"/>
    <property type="evidence" value="ECO:0000250"/>
    <property type="project" value="UniProtKB"/>
</dbReference>
<dbReference type="GO" id="GO:0005634">
    <property type="term" value="C:nucleus"/>
    <property type="evidence" value="ECO:0000250"/>
    <property type="project" value="UniProtKB"/>
</dbReference>
<dbReference type="GO" id="GO:0005524">
    <property type="term" value="F:ATP binding"/>
    <property type="evidence" value="ECO:0007669"/>
    <property type="project" value="UniProtKB-KW"/>
</dbReference>
<dbReference type="GO" id="GO:0000978">
    <property type="term" value="F:RNA polymerase II cis-regulatory region sequence-specific DNA binding"/>
    <property type="evidence" value="ECO:0000250"/>
    <property type="project" value="UniProtKB"/>
</dbReference>
<dbReference type="GO" id="GO:0098619">
    <property type="term" value="F:selenocysteine-tRNA ligase activity"/>
    <property type="evidence" value="ECO:0000250"/>
    <property type="project" value="UniProtKB"/>
</dbReference>
<dbReference type="GO" id="GO:0004828">
    <property type="term" value="F:serine-tRNA ligase activity"/>
    <property type="evidence" value="ECO:0000250"/>
    <property type="project" value="UniProtKB"/>
</dbReference>
<dbReference type="GO" id="GO:0002181">
    <property type="term" value="P:cytoplasmic translation"/>
    <property type="evidence" value="ECO:0000250"/>
    <property type="project" value="UniProtKB"/>
</dbReference>
<dbReference type="GO" id="GO:0016525">
    <property type="term" value="P:negative regulation of angiogenesis"/>
    <property type="evidence" value="ECO:0000250"/>
    <property type="project" value="UniProtKB"/>
</dbReference>
<dbReference type="GO" id="GO:0000122">
    <property type="term" value="P:negative regulation of transcription by RNA polymerase II"/>
    <property type="evidence" value="ECO:0000250"/>
    <property type="project" value="UniProtKB"/>
</dbReference>
<dbReference type="GO" id="GO:1904046">
    <property type="term" value="P:negative regulation of vascular endothelial growth factor production"/>
    <property type="evidence" value="ECO:0000250"/>
    <property type="project" value="UniProtKB"/>
</dbReference>
<dbReference type="GO" id="GO:0001514">
    <property type="term" value="P:selenocysteine incorporation"/>
    <property type="evidence" value="ECO:0000250"/>
    <property type="project" value="UniProtKB"/>
</dbReference>
<dbReference type="GO" id="GO:0006434">
    <property type="term" value="P:seryl-tRNA aminoacylation"/>
    <property type="evidence" value="ECO:0000250"/>
    <property type="project" value="UniProtKB"/>
</dbReference>
<dbReference type="CDD" id="cd00770">
    <property type="entry name" value="SerRS_core"/>
    <property type="match status" value="1"/>
</dbReference>
<dbReference type="FunFam" id="1.10.287.40:FF:000002">
    <property type="entry name" value="Serine--tRNA ligase, cytoplasmic"/>
    <property type="match status" value="1"/>
</dbReference>
<dbReference type="FunFam" id="3.30.930.10:FF:000027">
    <property type="entry name" value="Serine--tRNA ligase, cytoplasmic"/>
    <property type="match status" value="1"/>
</dbReference>
<dbReference type="Gene3D" id="3.30.930.10">
    <property type="entry name" value="Bira Bifunctional Protein, Domain 2"/>
    <property type="match status" value="1"/>
</dbReference>
<dbReference type="Gene3D" id="1.10.287.40">
    <property type="entry name" value="Serine-tRNA synthetase, tRNA binding domain"/>
    <property type="match status" value="1"/>
</dbReference>
<dbReference type="InterPro" id="IPR002314">
    <property type="entry name" value="aa-tRNA-synt_IIb"/>
</dbReference>
<dbReference type="InterPro" id="IPR006195">
    <property type="entry name" value="aa-tRNA-synth_II"/>
</dbReference>
<dbReference type="InterPro" id="IPR045864">
    <property type="entry name" value="aa-tRNA-synth_II/BPL/LPL"/>
</dbReference>
<dbReference type="InterPro" id="IPR002317">
    <property type="entry name" value="Ser-tRNA-ligase_type_1"/>
</dbReference>
<dbReference type="InterPro" id="IPR015866">
    <property type="entry name" value="Ser-tRNA-synth_1_N"/>
</dbReference>
<dbReference type="InterPro" id="IPR042103">
    <property type="entry name" value="SerRS_1_N_sf"/>
</dbReference>
<dbReference type="InterPro" id="IPR033729">
    <property type="entry name" value="SerRS_core"/>
</dbReference>
<dbReference type="InterPro" id="IPR010978">
    <property type="entry name" value="tRNA-bd_arm"/>
</dbReference>
<dbReference type="NCBIfam" id="TIGR00414">
    <property type="entry name" value="serS"/>
    <property type="match status" value="1"/>
</dbReference>
<dbReference type="PANTHER" id="PTHR11778">
    <property type="entry name" value="SERYL-TRNA SYNTHETASE"/>
    <property type="match status" value="1"/>
</dbReference>
<dbReference type="Pfam" id="PF02403">
    <property type="entry name" value="Seryl_tRNA_N"/>
    <property type="match status" value="1"/>
</dbReference>
<dbReference type="Pfam" id="PF00587">
    <property type="entry name" value="tRNA-synt_2b"/>
    <property type="match status" value="1"/>
</dbReference>
<dbReference type="PIRSF" id="PIRSF001529">
    <property type="entry name" value="Ser-tRNA-synth_IIa"/>
    <property type="match status" value="1"/>
</dbReference>
<dbReference type="PRINTS" id="PR00981">
    <property type="entry name" value="TRNASYNTHSER"/>
</dbReference>
<dbReference type="SUPFAM" id="SSF55681">
    <property type="entry name" value="Class II aaRS and biotin synthetases"/>
    <property type="match status" value="1"/>
</dbReference>
<dbReference type="SUPFAM" id="SSF46589">
    <property type="entry name" value="tRNA-binding arm"/>
    <property type="match status" value="1"/>
</dbReference>
<dbReference type="PROSITE" id="PS50862">
    <property type="entry name" value="AA_TRNA_LIGASE_II"/>
    <property type="match status" value="1"/>
</dbReference>
<reference key="1">
    <citation type="submission" date="2005-06" db="EMBL/GenBank/DDBJ databases">
        <title>DNA sequences of macaque genes expressed in brain or testis and its evolutionary implications.</title>
        <authorList>
            <consortium name="International consortium for macaque cDNA sequencing and analysis"/>
        </authorList>
    </citation>
    <scope>NUCLEOTIDE SEQUENCE [LARGE SCALE MRNA]</scope>
    <source>
        <tissue>Brain cortex</tissue>
    </source>
</reference>
<proteinExistence type="evidence at transcript level"/>
<feature type="chain" id="PRO_0000270763" description="Serine--tRNA ligase, cytoplasmic">
    <location>
        <begin position="1"/>
        <end position="514"/>
    </location>
</feature>
<feature type="region of interest" description="Interaction with tRNA" evidence="1">
    <location>
        <begin position="9"/>
        <end position="61"/>
    </location>
</feature>
<feature type="region of interest" description="Disordered" evidence="2">
    <location>
        <begin position="471"/>
        <end position="514"/>
    </location>
</feature>
<feature type="short sequence motif" description="Nuclear localization signal" evidence="1">
    <location>
        <begin position="482"/>
        <end position="494"/>
    </location>
</feature>
<feature type="compositionally biased region" description="Basic and acidic residues" evidence="2">
    <location>
        <begin position="479"/>
        <end position="502"/>
    </location>
</feature>
<feature type="compositionally biased region" description="Polar residues" evidence="2">
    <location>
        <begin position="505"/>
        <end position="514"/>
    </location>
</feature>
<feature type="binding site" evidence="1">
    <location>
        <position position="271"/>
    </location>
    <ligand>
        <name>L-serine</name>
        <dbReference type="ChEBI" id="CHEBI:33384"/>
    </ligand>
</feature>
<feature type="binding site" evidence="1">
    <location>
        <begin position="302"/>
        <end position="304"/>
    </location>
    <ligand>
        <name>ATP</name>
        <dbReference type="ChEBI" id="CHEBI:30616"/>
    </ligand>
</feature>
<feature type="binding site" evidence="1">
    <location>
        <position position="302"/>
    </location>
    <ligand>
        <name>L-serine</name>
        <dbReference type="ChEBI" id="CHEBI:33384"/>
    </ligand>
</feature>
<feature type="binding site" evidence="1">
    <location>
        <begin position="318"/>
        <end position="321"/>
    </location>
    <ligand>
        <name>ATP</name>
        <dbReference type="ChEBI" id="CHEBI:30616"/>
    </ligand>
</feature>
<feature type="binding site" evidence="1">
    <location>
        <position position="325"/>
    </location>
    <ligand>
        <name>L-serine</name>
        <dbReference type="ChEBI" id="CHEBI:33384"/>
    </ligand>
</feature>
<feature type="binding site" evidence="1">
    <location>
        <begin position="391"/>
        <end position="394"/>
    </location>
    <ligand>
        <name>ATP</name>
        <dbReference type="ChEBI" id="CHEBI:30616"/>
    </ligand>
</feature>
<feature type="binding site" evidence="1">
    <location>
        <position position="427"/>
    </location>
    <ligand>
        <name>L-serine</name>
        <dbReference type="ChEBI" id="CHEBI:33384"/>
    </ligand>
</feature>
<feature type="site" description="Important for serine binding" evidence="1">
    <location>
        <position position="429"/>
    </location>
</feature>
<feature type="modified residue" description="N-acetylmethionine" evidence="1">
    <location>
        <position position="1"/>
    </location>
</feature>
<feature type="modified residue" description="Phosphoserine" evidence="1">
    <location>
        <position position="241"/>
    </location>
</feature>
<feature type="modified residue" description="N6-acetyllysine" evidence="1">
    <location>
        <position position="323"/>
    </location>
</feature>
<sequence>MVLDLDLFRVDKGGDPALIRETQEKRFKDPGLVDQLVKADSEWRRCRFRADNLNKLKNLCSKTIGEKMKKKEPVEDDESVPENVLNFDDLTADALANLKVSQIKKVRLLIDEAILKCDAERIKLEAERFENLREIGNLLHPSVPISNDEDADNKVERIWGDCTVRKKYSHVDLVVMVDGFEGEKGAVVAGSRGYFLKGVLVFLEQALIQYALRTLGSRGYTPIYTPFFMRKEVMQEVAQLSQFDEELYKVIGKGSEKSDDNSYDEKYLIATSEQPIAALHRDEWLRPEDLPIKYAGLSTCFRQEVGSHGRDTRGIFRVHQFEKIEQFVYSSPHDNKSWEMFEEMITTAEEFYQSLGIPYHIVNIVSGSLNHAASKKLDLEAWFPGSGAFRELVSCSNCTDYQARRLRIRYGQTKKMMDKVEFVHMLNATMCATTRTICAILENYQTEKGITVPEKLKEFMPPGLQELIPFVKPAPIDQEPSKKQKKQHEGSKKKAAARDVALESRLQNMEVTDA</sequence>
<evidence type="ECO:0000250" key="1">
    <source>
        <dbReference type="UniProtKB" id="P49591"/>
    </source>
</evidence>
<evidence type="ECO:0000256" key="2">
    <source>
        <dbReference type="SAM" id="MobiDB-lite"/>
    </source>
</evidence>
<evidence type="ECO:0000305" key="3"/>
<organism>
    <name type="scientific">Macaca fascicularis</name>
    <name type="common">Crab-eating macaque</name>
    <name type="synonym">Cynomolgus monkey</name>
    <dbReference type="NCBI Taxonomy" id="9541"/>
    <lineage>
        <taxon>Eukaryota</taxon>
        <taxon>Metazoa</taxon>
        <taxon>Chordata</taxon>
        <taxon>Craniata</taxon>
        <taxon>Vertebrata</taxon>
        <taxon>Euteleostomi</taxon>
        <taxon>Mammalia</taxon>
        <taxon>Eutheria</taxon>
        <taxon>Euarchontoglires</taxon>
        <taxon>Primates</taxon>
        <taxon>Haplorrhini</taxon>
        <taxon>Catarrhini</taxon>
        <taxon>Cercopithecidae</taxon>
        <taxon>Cercopithecinae</taxon>
        <taxon>Macaca</taxon>
    </lineage>
</organism>
<accession>Q4R4U9</accession>